<keyword id="KW-0479">Metal-binding</keyword>
<keyword id="KW-1185">Reference proteome</keyword>
<keyword id="KW-0687">Ribonucleoprotein</keyword>
<keyword id="KW-0689">Ribosomal protein</keyword>
<keyword id="KW-0694">RNA-binding</keyword>
<keyword id="KW-0699">rRNA-binding</keyword>
<keyword id="KW-0862">Zinc</keyword>
<gene>
    <name evidence="1" type="primary">rpmE</name>
    <name type="ordered locus">BL1711</name>
</gene>
<name>RL31_BIFLO</name>
<accession>Q8G3P6</accession>
<reference key="1">
    <citation type="journal article" date="2002" name="Proc. Natl. Acad. Sci. U.S.A.">
        <title>The genome sequence of Bifidobacterium longum reflects its adaptation to the human gastrointestinal tract.</title>
        <authorList>
            <person name="Schell M.A."/>
            <person name="Karmirantzou M."/>
            <person name="Snel B."/>
            <person name="Vilanova D."/>
            <person name="Berger B."/>
            <person name="Pessi G."/>
            <person name="Zwahlen M.-C."/>
            <person name="Desiere F."/>
            <person name="Bork P."/>
            <person name="Delley M."/>
            <person name="Pridmore R.D."/>
            <person name="Arigoni F."/>
        </authorList>
    </citation>
    <scope>NUCLEOTIDE SEQUENCE [LARGE SCALE GENOMIC DNA]</scope>
    <source>
        <strain>NCC 2705</strain>
    </source>
</reference>
<comment type="function">
    <text evidence="1">Binds the 23S rRNA.</text>
</comment>
<comment type="cofactor">
    <cofactor evidence="1">
        <name>Zn(2+)</name>
        <dbReference type="ChEBI" id="CHEBI:29105"/>
    </cofactor>
    <text evidence="1">Binds 1 zinc ion per subunit.</text>
</comment>
<comment type="subunit">
    <text evidence="1">Part of the 50S ribosomal subunit.</text>
</comment>
<comment type="similarity">
    <text evidence="1">Belongs to the bacterial ribosomal protein bL31 family. Type A subfamily.</text>
</comment>
<proteinExistence type="inferred from homology"/>
<sequence>MQQGIHPDYHPVEVTCSCGNTFVTRTAGKEDHMFVDVCSQCHPFYTGKQKILDTGGRVARFEKRYGKKSK</sequence>
<dbReference type="EMBL" id="AE014295">
    <property type="protein sequence ID" value="AAN25495.1"/>
    <property type="molecule type" value="Genomic_DNA"/>
</dbReference>
<dbReference type="RefSeq" id="NP_696859.1">
    <property type="nucleotide sequence ID" value="NC_004307.2"/>
</dbReference>
<dbReference type="RefSeq" id="WP_003830110.1">
    <property type="nucleotide sequence ID" value="NC_004307.2"/>
</dbReference>
<dbReference type="SMR" id="Q8G3P6"/>
<dbReference type="STRING" id="206672.BL1711"/>
<dbReference type="EnsemblBacteria" id="AAN25495">
    <property type="protein sequence ID" value="AAN25495"/>
    <property type="gene ID" value="BL1711"/>
</dbReference>
<dbReference type="GeneID" id="69578766"/>
<dbReference type="KEGG" id="blo:BL1711"/>
<dbReference type="PATRIC" id="fig|206672.9.peg.1764"/>
<dbReference type="HOGENOM" id="CLU_114306_4_3_11"/>
<dbReference type="OrthoDB" id="9803251at2"/>
<dbReference type="PhylomeDB" id="Q8G3P6"/>
<dbReference type="PRO" id="PR:Q8G3P6"/>
<dbReference type="Proteomes" id="UP000000439">
    <property type="component" value="Chromosome"/>
</dbReference>
<dbReference type="GO" id="GO:1990904">
    <property type="term" value="C:ribonucleoprotein complex"/>
    <property type="evidence" value="ECO:0007669"/>
    <property type="project" value="UniProtKB-KW"/>
</dbReference>
<dbReference type="GO" id="GO:0005840">
    <property type="term" value="C:ribosome"/>
    <property type="evidence" value="ECO:0007669"/>
    <property type="project" value="UniProtKB-KW"/>
</dbReference>
<dbReference type="GO" id="GO:0046872">
    <property type="term" value="F:metal ion binding"/>
    <property type="evidence" value="ECO:0007669"/>
    <property type="project" value="UniProtKB-KW"/>
</dbReference>
<dbReference type="GO" id="GO:0019843">
    <property type="term" value="F:rRNA binding"/>
    <property type="evidence" value="ECO:0007669"/>
    <property type="project" value="UniProtKB-KW"/>
</dbReference>
<dbReference type="GO" id="GO:0003735">
    <property type="term" value="F:structural constituent of ribosome"/>
    <property type="evidence" value="ECO:0007669"/>
    <property type="project" value="InterPro"/>
</dbReference>
<dbReference type="GO" id="GO:0006412">
    <property type="term" value="P:translation"/>
    <property type="evidence" value="ECO:0007669"/>
    <property type="project" value="UniProtKB-UniRule"/>
</dbReference>
<dbReference type="Gene3D" id="4.10.830.30">
    <property type="entry name" value="Ribosomal protein L31"/>
    <property type="match status" value="1"/>
</dbReference>
<dbReference type="HAMAP" id="MF_00501">
    <property type="entry name" value="Ribosomal_bL31_1"/>
    <property type="match status" value="1"/>
</dbReference>
<dbReference type="InterPro" id="IPR034704">
    <property type="entry name" value="Ribosomal_bL28/bL31-like_sf"/>
</dbReference>
<dbReference type="InterPro" id="IPR002150">
    <property type="entry name" value="Ribosomal_bL31"/>
</dbReference>
<dbReference type="InterPro" id="IPR027491">
    <property type="entry name" value="Ribosomal_bL31_A"/>
</dbReference>
<dbReference type="InterPro" id="IPR042105">
    <property type="entry name" value="Ribosomal_bL31_sf"/>
</dbReference>
<dbReference type="NCBIfam" id="TIGR00105">
    <property type="entry name" value="L31"/>
    <property type="match status" value="1"/>
</dbReference>
<dbReference type="NCBIfam" id="NF000612">
    <property type="entry name" value="PRK00019.1"/>
    <property type="match status" value="1"/>
</dbReference>
<dbReference type="NCBIfam" id="NF001809">
    <property type="entry name" value="PRK00528.1"/>
    <property type="match status" value="1"/>
</dbReference>
<dbReference type="PANTHER" id="PTHR33280">
    <property type="entry name" value="50S RIBOSOMAL PROTEIN L31, CHLOROPLASTIC"/>
    <property type="match status" value="1"/>
</dbReference>
<dbReference type="PANTHER" id="PTHR33280:SF1">
    <property type="entry name" value="LARGE RIBOSOMAL SUBUNIT PROTEIN BL31C"/>
    <property type="match status" value="1"/>
</dbReference>
<dbReference type="Pfam" id="PF01197">
    <property type="entry name" value="Ribosomal_L31"/>
    <property type="match status" value="1"/>
</dbReference>
<dbReference type="PRINTS" id="PR01249">
    <property type="entry name" value="RIBOSOMALL31"/>
</dbReference>
<dbReference type="SUPFAM" id="SSF143800">
    <property type="entry name" value="L28p-like"/>
    <property type="match status" value="1"/>
</dbReference>
<dbReference type="PROSITE" id="PS01143">
    <property type="entry name" value="RIBOSOMAL_L31"/>
    <property type="match status" value="1"/>
</dbReference>
<feature type="chain" id="PRO_0000173082" description="Large ribosomal subunit protein bL31">
    <location>
        <begin position="1"/>
        <end position="70"/>
    </location>
</feature>
<feature type="binding site" evidence="1">
    <location>
        <position position="16"/>
    </location>
    <ligand>
        <name>Zn(2+)</name>
        <dbReference type="ChEBI" id="CHEBI:29105"/>
    </ligand>
</feature>
<feature type="binding site" evidence="1">
    <location>
        <position position="18"/>
    </location>
    <ligand>
        <name>Zn(2+)</name>
        <dbReference type="ChEBI" id="CHEBI:29105"/>
    </ligand>
</feature>
<feature type="binding site" evidence="1">
    <location>
        <position position="38"/>
    </location>
    <ligand>
        <name>Zn(2+)</name>
        <dbReference type="ChEBI" id="CHEBI:29105"/>
    </ligand>
</feature>
<feature type="binding site" evidence="1">
    <location>
        <position position="41"/>
    </location>
    <ligand>
        <name>Zn(2+)</name>
        <dbReference type="ChEBI" id="CHEBI:29105"/>
    </ligand>
</feature>
<organism>
    <name type="scientific">Bifidobacterium longum (strain NCC 2705)</name>
    <dbReference type="NCBI Taxonomy" id="206672"/>
    <lineage>
        <taxon>Bacteria</taxon>
        <taxon>Bacillati</taxon>
        <taxon>Actinomycetota</taxon>
        <taxon>Actinomycetes</taxon>
        <taxon>Bifidobacteriales</taxon>
        <taxon>Bifidobacteriaceae</taxon>
        <taxon>Bifidobacterium</taxon>
    </lineage>
</organism>
<protein>
    <recommendedName>
        <fullName evidence="1">Large ribosomal subunit protein bL31</fullName>
    </recommendedName>
    <alternativeName>
        <fullName evidence="2">50S ribosomal protein L31</fullName>
    </alternativeName>
</protein>
<evidence type="ECO:0000255" key="1">
    <source>
        <dbReference type="HAMAP-Rule" id="MF_00501"/>
    </source>
</evidence>
<evidence type="ECO:0000305" key="2"/>